<dbReference type="EMBL" id="M64265">
    <property type="protein sequence ID" value="AAA26861.1"/>
    <property type="molecule type" value="Genomic_DNA"/>
</dbReference>
<dbReference type="EMBL" id="M90060">
    <property type="protein sequence ID" value="AAA26854.1"/>
    <property type="molecule type" value="Genomic_DNA"/>
</dbReference>
<dbReference type="EMBL" id="CP003504">
    <property type="protein sequence ID" value="AFM70620.1"/>
    <property type="molecule type" value="Genomic_DNA"/>
</dbReference>
<dbReference type="RefSeq" id="WP_010718599.1">
    <property type="nucleotide sequence ID" value="NZ_KB946231.1"/>
</dbReference>
<dbReference type="SMR" id="P26682"/>
<dbReference type="GeneID" id="56786972"/>
<dbReference type="KEGG" id="ehr:EHR_08475"/>
<dbReference type="eggNOG" id="COG0636">
    <property type="taxonomic scope" value="Bacteria"/>
</dbReference>
<dbReference type="HOGENOM" id="CLU_148047_1_1_9"/>
<dbReference type="OrthoDB" id="2357540at2"/>
<dbReference type="Proteomes" id="UP000002895">
    <property type="component" value="Chromosome"/>
</dbReference>
<dbReference type="GO" id="GO:0005886">
    <property type="term" value="C:plasma membrane"/>
    <property type="evidence" value="ECO:0007669"/>
    <property type="project" value="UniProtKB-SubCell"/>
</dbReference>
<dbReference type="GO" id="GO:0045259">
    <property type="term" value="C:proton-transporting ATP synthase complex"/>
    <property type="evidence" value="ECO:0007669"/>
    <property type="project" value="UniProtKB-KW"/>
</dbReference>
<dbReference type="GO" id="GO:0033177">
    <property type="term" value="C:proton-transporting two-sector ATPase complex, proton-transporting domain"/>
    <property type="evidence" value="ECO:0007669"/>
    <property type="project" value="InterPro"/>
</dbReference>
<dbReference type="GO" id="GO:0008289">
    <property type="term" value="F:lipid binding"/>
    <property type="evidence" value="ECO:0007669"/>
    <property type="project" value="UniProtKB-KW"/>
</dbReference>
<dbReference type="GO" id="GO:0046933">
    <property type="term" value="F:proton-transporting ATP synthase activity, rotational mechanism"/>
    <property type="evidence" value="ECO:0007669"/>
    <property type="project" value="UniProtKB-UniRule"/>
</dbReference>
<dbReference type="CDD" id="cd18185">
    <property type="entry name" value="ATP-synt_Fo_c_ATPE"/>
    <property type="match status" value="1"/>
</dbReference>
<dbReference type="FunFam" id="1.20.20.10:FF:000004">
    <property type="entry name" value="ATP synthase subunit c"/>
    <property type="match status" value="1"/>
</dbReference>
<dbReference type="Gene3D" id="1.20.20.10">
    <property type="entry name" value="F1F0 ATP synthase subunit C"/>
    <property type="match status" value="1"/>
</dbReference>
<dbReference type="HAMAP" id="MF_01396">
    <property type="entry name" value="ATP_synth_c_bact"/>
    <property type="match status" value="1"/>
</dbReference>
<dbReference type="InterPro" id="IPR005953">
    <property type="entry name" value="ATP_synth_csu_bac/chlpt"/>
</dbReference>
<dbReference type="InterPro" id="IPR000454">
    <property type="entry name" value="ATP_synth_F0_csu"/>
</dbReference>
<dbReference type="InterPro" id="IPR020537">
    <property type="entry name" value="ATP_synth_F0_csu_DDCD_BS"/>
</dbReference>
<dbReference type="InterPro" id="IPR038662">
    <property type="entry name" value="ATP_synth_F0_csu_sf"/>
</dbReference>
<dbReference type="InterPro" id="IPR002379">
    <property type="entry name" value="ATPase_proteolipid_c-like_dom"/>
</dbReference>
<dbReference type="InterPro" id="IPR035921">
    <property type="entry name" value="F/V-ATP_Csub_sf"/>
</dbReference>
<dbReference type="NCBIfam" id="TIGR01260">
    <property type="entry name" value="ATP_synt_c"/>
    <property type="match status" value="1"/>
</dbReference>
<dbReference type="NCBIfam" id="NF005363">
    <property type="entry name" value="PRK06876.1"/>
    <property type="match status" value="1"/>
</dbReference>
<dbReference type="PANTHER" id="PTHR10031">
    <property type="entry name" value="ATP SYNTHASE LIPID-BINDING PROTEIN, MITOCHONDRIAL"/>
    <property type="match status" value="1"/>
</dbReference>
<dbReference type="PANTHER" id="PTHR10031:SF0">
    <property type="entry name" value="ATPASE PROTEIN 9"/>
    <property type="match status" value="1"/>
</dbReference>
<dbReference type="Pfam" id="PF00137">
    <property type="entry name" value="ATP-synt_C"/>
    <property type="match status" value="1"/>
</dbReference>
<dbReference type="PRINTS" id="PR00124">
    <property type="entry name" value="ATPASEC"/>
</dbReference>
<dbReference type="SUPFAM" id="SSF81333">
    <property type="entry name" value="F1F0 ATP synthase subunit C"/>
    <property type="match status" value="1"/>
</dbReference>
<dbReference type="PROSITE" id="PS00605">
    <property type="entry name" value="ATPASE_C"/>
    <property type="match status" value="1"/>
</dbReference>
<protein>
    <recommendedName>
        <fullName evidence="2">ATP synthase subunit c</fullName>
    </recommendedName>
    <alternativeName>
        <fullName evidence="2">ATP synthase F(0) sector subunit c</fullName>
    </alternativeName>
    <alternativeName>
        <fullName evidence="2">F-type ATPase subunit c</fullName>
        <shortName evidence="2">F-ATPase subunit c</shortName>
    </alternativeName>
    <alternativeName>
        <fullName evidence="2">Lipid-binding protein</fullName>
    </alternativeName>
</protein>
<feature type="chain" id="PRO_0000112147" description="ATP synthase subunit c">
    <location>
        <begin position="1"/>
        <end position="71"/>
    </location>
</feature>
<feature type="transmembrane region" description="Helical" evidence="2">
    <location>
        <begin position="4"/>
        <end position="24"/>
    </location>
</feature>
<feature type="transmembrane region" description="Helical" evidence="2">
    <location>
        <begin position="47"/>
        <end position="67"/>
    </location>
</feature>
<feature type="site" description="Reversibly protonated during proton transport" evidence="2">
    <location>
        <position position="54"/>
    </location>
</feature>
<sequence>MNYIAAAIAIMGAAIGAGYGNGQVISKTIESMARQPEMSGQLRTTMFIGVALVEAVPILGVVIALILVFAV</sequence>
<organism>
    <name type="scientific">Enterococcus hirae (strain ATCC 9790 / DSM 20160 / JCM 8729 / LMG 6399 / NBRC 3181 / NCIMB 6459 / NCDO 1258 / NCTC 12367 / WDCM 00089 / R)</name>
    <dbReference type="NCBI Taxonomy" id="768486"/>
    <lineage>
        <taxon>Bacteria</taxon>
        <taxon>Bacillati</taxon>
        <taxon>Bacillota</taxon>
        <taxon>Bacilli</taxon>
        <taxon>Lactobacillales</taxon>
        <taxon>Enterococcaceae</taxon>
        <taxon>Enterococcus</taxon>
    </lineage>
</organism>
<reference key="1">
    <citation type="journal article" date="1992" name="J. Bacteriol.">
        <title>Gene structure of Enterococcus hirae (Streptococcus faecalis) F1F0-ATPase, which functions as a regulator of cytoplasmic pH.</title>
        <authorList>
            <person name="Shibata C."/>
            <person name="Ehara T."/>
            <person name="Tomura K."/>
            <person name="Igarashi K."/>
            <person name="Kobayashi H."/>
        </authorList>
    </citation>
    <scope>NUCLEOTIDE SEQUENCE [GENOMIC DNA]</scope>
    <source>
        <strain>ATCC 9790 / DSM 20160 / JCM 8729 / LMG 6399 / NBRC 3181 / NCIMB 6459 / NCDO 1258 / NCTC 12367 / WDCM 00089 / R</strain>
    </source>
</reference>
<reference key="2">
    <citation type="journal article" date="2012" name="J. Bacteriol.">
        <title>Genome sequence of Enterococcus hirae (Streptococcus faecalis) ATCC 9790, a model organism for the study of ion transport, bioenergetics, and copper homeostasis.</title>
        <authorList>
            <person name="Gaechter T."/>
            <person name="Wunderlin C."/>
            <person name="Schmidheini T."/>
            <person name="Solioz M."/>
        </authorList>
    </citation>
    <scope>NUCLEOTIDE SEQUENCE [LARGE SCALE GENOMIC DNA]</scope>
    <source>
        <strain>ATCC 9790 / DSM 20160 / JCM 8729 / LMG 6399 / NBRC 3181 / NCIMB 6459 / NCDO 1258 / NCTC 12367 / WDCM 00089 / R</strain>
    </source>
</reference>
<evidence type="ECO:0000250" key="1"/>
<evidence type="ECO:0000255" key="2">
    <source>
        <dbReference type="HAMAP-Rule" id="MF_01396"/>
    </source>
</evidence>
<accession>P26682</accession>
<accession>I6S1T5</accession>
<comment type="function">
    <text evidence="2">F(1)F(0) ATP synthase produces ATP from ADP in the presence of a proton or sodium gradient. F-type ATPases consist of two structural domains, F(1) containing the extramembraneous catalytic core and F(0) containing the membrane proton channel, linked together by a central stalk and a peripheral stalk. During catalysis, ATP synthesis in the catalytic domain of F(1) is coupled via a rotary mechanism of the central stalk subunits to proton translocation.</text>
</comment>
<comment type="function">
    <text evidence="2">Key component of the F(0) channel; it plays a direct role in translocation across the membrane. A homomeric c-ring of between 10-14 subunits forms the central stalk rotor element with the F(1) delta and epsilon subunits.</text>
</comment>
<comment type="subunit">
    <text evidence="2">F-type ATPases have 2 components, F(1) - the catalytic core - and F(0) - the membrane proton channel. F(1) has five subunits: alpha(3), beta(3), gamma(1), delta(1), epsilon(1). F(0) has three main subunits: a(1), b(2) and c(10-14). The alpha and beta chains form an alternating ring which encloses part of the gamma chain. F(1) is attached to F(0) by a central stalk formed by the gamma and epsilon chains, while a peripheral stalk is formed by the delta and b chains.</text>
</comment>
<comment type="subcellular location">
    <subcellularLocation>
        <location evidence="2">Cell membrane</location>
        <topology evidence="2">Multi-pass membrane protein</topology>
    </subcellularLocation>
</comment>
<comment type="miscellaneous">
    <text evidence="1">Dicyclohexylcarbodiimide (DCDD) binding to the active glutamate residue inhibits ATPase in vitro.</text>
</comment>
<comment type="similarity">
    <text evidence="2">Belongs to the ATPase C chain family.</text>
</comment>
<name>ATPL_ENTHA</name>
<gene>
    <name evidence="2" type="primary">atpE</name>
    <name type="ordered locus">EHR_08475</name>
</gene>
<keyword id="KW-0066">ATP synthesis</keyword>
<keyword id="KW-1003">Cell membrane</keyword>
<keyword id="KW-0138">CF(0)</keyword>
<keyword id="KW-0375">Hydrogen ion transport</keyword>
<keyword id="KW-0406">Ion transport</keyword>
<keyword id="KW-0446">Lipid-binding</keyword>
<keyword id="KW-0472">Membrane</keyword>
<keyword id="KW-0812">Transmembrane</keyword>
<keyword id="KW-1133">Transmembrane helix</keyword>
<keyword id="KW-0813">Transport</keyword>
<proteinExistence type="inferred from homology"/>